<comment type="function">
    <text evidence="1">Part of the MsrPQ system that repairs oxidized periplasmic proteins containing methionine sulfoxide residues (Met-O), using respiratory chain electrons. Thus protects these proteins from oxidative-stress damage caused by reactive species of oxygen and chlorine generated by the host defense mechanisms. MsrPQ is essential for the maintenance of envelope integrity under bleach stress, rescuing a wide series of structurally unrelated periplasmic proteins from methionine oxidation. MsrQ provides electrons for reduction to the reductase catalytic subunit MsrP, using the quinone pool of the respiratory chain.</text>
</comment>
<comment type="cofactor">
    <cofactor evidence="1">
        <name>FMN</name>
        <dbReference type="ChEBI" id="CHEBI:58210"/>
    </cofactor>
    <text evidence="1">Binds 1 FMN per subunit.</text>
</comment>
<comment type="cofactor">
    <cofactor evidence="1">
        <name>heme b</name>
        <dbReference type="ChEBI" id="CHEBI:60344"/>
    </cofactor>
    <text evidence="1">Binds 1 heme b (iron(II)-protoporphyrin IX) group per subunit.</text>
</comment>
<comment type="subunit">
    <text evidence="1">Heterodimer of a catalytic subunit (MsrP) and a heme-binding subunit (MsrQ).</text>
</comment>
<comment type="subcellular location">
    <subcellularLocation>
        <location evidence="1">Cell inner membrane</location>
        <topology evidence="1">Multi-pass membrane protein</topology>
    </subcellularLocation>
</comment>
<comment type="similarity">
    <text evidence="1">Belongs to the MsrQ family.</text>
</comment>
<comment type="sequence caution" evidence="2">
    <conflict type="erroneous initiation">
        <sequence resource="EMBL-CDS" id="CAE38599"/>
    </conflict>
</comment>
<proteinExistence type="inferred from homology"/>
<keyword id="KW-0997">Cell inner membrane</keyword>
<keyword id="KW-1003">Cell membrane</keyword>
<keyword id="KW-0249">Electron transport</keyword>
<keyword id="KW-0285">Flavoprotein</keyword>
<keyword id="KW-0288">FMN</keyword>
<keyword id="KW-0349">Heme</keyword>
<keyword id="KW-0408">Iron</keyword>
<keyword id="KW-0472">Membrane</keyword>
<keyword id="KW-0479">Metal-binding</keyword>
<keyword id="KW-0812">Transmembrane</keyword>
<keyword id="KW-1133">Transmembrane helix</keyword>
<keyword id="KW-0813">Transport</keyword>
<dbReference type="EMBL" id="BX640433">
    <property type="protein sequence ID" value="CAE38599.1"/>
    <property type="status" value="ALT_INIT"/>
    <property type="molecule type" value="Genomic_DNA"/>
</dbReference>
<dbReference type="SMR" id="Q7W5H7"/>
<dbReference type="KEGG" id="bpa:BPP3314"/>
<dbReference type="HOGENOM" id="CLU_080662_0_0_4"/>
<dbReference type="Proteomes" id="UP000001421">
    <property type="component" value="Chromosome"/>
</dbReference>
<dbReference type="GO" id="GO:0005886">
    <property type="term" value="C:plasma membrane"/>
    <property type="evidence" value="ECO:0007669"/>
    <property type="project" value="UniProtKB-SubCell"/>
</dbReference>
<dbReference type="GO" id="GO:0009055">
    <property type="term" value="F:electron transfer activity"/>
    <property type="evidence" value="ECO:0007669"/>
    <property type="project" value="UniProtKB-UniRule"/>
</dbReference>
<dbReference type="GO" id="GO:0010181">
    <property type="term" value="F:FMN binding"/>
    <property type="evidence" value="ECO:0007669"/>
    <property type="project" value="UniProtKB-UniRule"/>
</dbReference>
<dbReference type="GO" id="GO:0020037">
    <property type="term" value="F:heme binding"/>
    <property type="evidence" value="ECO:0007669"/>
    <property type="project" value="UniProtKB-UniRule"/>
</dbReference>
<dbReference type="GO" id="GO:0046872">
    <property type="term" value="F:metal ion binding"/>
    <property type="evidence" value="ECO:0007669"/>
    <property type="project" value="UniProtKB-KW"/>
</dbReference>
<dbReference type="GO" id="GO:0016679">
    <property type="term" value="F:oxidoreductase activity, acting on diphenols and related substances as donors"/>
    <property type="evidence" value="ECO:0007669"/>
    <property type="project" value="TreeGrafter"/>
</dbReference>
<dbReference type="GO" id="GO:0030091">
    <property type="term" value="P:protein repair"/>
    <property type="evidence" value="ECO:0007669"/>
    <property type="project" value="UniProtKB-UniRule"/>
</dbReference>
<dbReference type="HAMAP" id="MF_01207">
    <property type="entry name" value="MsrQ"/>
    <property type="match status" value="1"/>
</dbReference>
<dbReference type="InterPro" id="IPR013130">
    <property type="entry name" value="Fe3_Rdtase_TM_dom"/>
</dbReference>
<dbReference type="InterPro" id="IPR022837">
    <property type="entry name" value="MsrQ-like"/>
</dbReference>
<dbReference type="NCBIfam" id="NF003836">
    <property type="entry name" value="PRK05419.2-3"/>
    <property type="match status" value="1"/>
</dbReference>
<dbReference type="PANTHER" id="PTHR36964">
    <property type="entry name" value="PROTEIN-METHIONINE-SULFOXIDE REDUCTASE HEME-BINDING SUBUNIT MSRQ"/>
    <property type="match status" value="1"/>
</dbReference>
<dbReference type="PANTHER" id="PTHR36964:SF1">
    <property type="entry name" value="PROTEIN-METHIONINE-SULFOXIDE REDUCTASE HEME-BINDING SUBUNIT MSRQ"/>
    <property type="match status" value="1"/>
</dbReference>
<dbReference type="Pfam" id="PF01794">
    <property type="entry name" value="Ferric_reduct"/>
    <property type="match status" value="1"/>
</dbReference>
<protein>
    <recommendedName>
        <fullName evidence="1">Protein-methionine-sulfoxide reductase heme-binding subunit MsrQ</fullName>
    </recommendedName>
    <alternativeName>
        <fullName evidence="1">Flavocytochrome MsrQ</fullName>
    </alternativeName>
</protein>
<reference key="1">
    <citation type="journal article" date="2003" name="Nat. Genet.">
        <title>Comparative analysis of the genome sequences of Bordetella pertussis, Bordetella parapertussis and Bordetella bronchiseptica.</title>
        <authorList>
            <person name="Parkhill J."/>
            <person name="Sebaihia M."/>
            <person name="Preston A."/>
            <person name="Murphy L.D."/>
            <person name="Thomson N.R."/>
            <person name="Harris D.E."/>
            <person name="Holden M.T.G."/>
            <person name="Churcher C.M."/>
            <person name="Bentley S.D."/>
            <person name="Mungall K.L."/>
            <person name="Cerdeno-Tarraga A.-M."/>
            <person name="Temple L."/>
            <person name="James K.D."/>
            <person name="Harris B."/>
            <person name="Quail M.A."/>
            <person name="Achtman M."/>
            <person name="Atkin R."/>
            <person name="Baker S."/>
            <person name="Basham D."/>
            <person name="Bason N."/>
            <person name="Cherevach I."/>
            <person name="Chillingworth T."/>
            <person name="Collins M."/>
            <person name="Cronin A."/>
            <person name="Davis P."/>
            <person name="Doggett J."/>
            <person name="Feltwell T."/>
            <person name="Goble A."/>
            <person name="Hamlin N."/>
            <person name="Hauser H."/>
            <person name="Holroyd S."/>
            <person name="Jagels K."/>
            <person name="Leather S."/>
            <person name="Moule S."/>
            <person name="Norberczak H."/>
            <person name="O'Neil S."/>
            <person name="Ormond D."/>
            <person name="Price C."/>
            <person name="Rabbinowitsch E."/>
            <person name="Rutter S."/>
            <person name="Sanders M."/>
            <person name="Saunders D."/>
            <person name="Seeger K."/>
            <person name="Sharp S."/>
            <person name="Simmonds M."/>
            <person name="Skelton J."/>
            <person name="Squares R."/>
            <person name="Squares S."/>
            <person name="Stevens K."/>
            <person name="Unwin L."/>
            <person name="Whitehead S."/>
            <person name="Barrell B.G."/>
            <person name="Maskell D.J."/>
        </authorList>
    </citation>
    <scope>NUCLEOTIDE SEQUENCE [LARGE SCALE GENOMIC DNA]</scope>
    <source>
        <strain>12822 / ATCC BAA-587 / NCTC 13253</strain>
    </source>
</reference>
<gene>
    <name evidence="1" type="primary">msrQ</name>
    <name type="ordered locus">BPP3314</name>
</gene>
<feature type="chain" id="PRO_0000091568" description="Protein-methionine-sulfoxide reductase heme-binding subunit MsrQ">
    <location>
        <begin position="1"/>
        <end position="206"/>
    </location>
</feature>
<feature type="transmembrane region" description="Helical" evidence="1">
    <location>
        <begin position="14"/>
        <end position="34"/>
    </location>
</feature>
<feature type="transmembrane region" description="Helical" evidence="1">
    <location>
        <begin position="45"/>
        <end position="65"/>
    </location>
</feature>
<feature type="transmembrane region" description="Helical" evidence="1">
    <location>
        <begin position="82"/>
        <end position="102"/>
    </location>
</feature>
<feature type="transmembrane region" description="Helical" evidence="1">
    <location>
        <begin position="118"/>
        <end position="138"/>
    </location>
</feature>
<feature type="transmembrane region" description="Helical" evidence="1">
    <location>
        <begin position="149"/>
        <end position="169"/>
    </location>
</feature>
<feature type="transmembrane region" description="Helical" evidence="1">
    <location>
        <begin position="179"/>
        <end position="199"/>
    </location>
</feature>
<name>MSRQ_BORPA</name>
<evidence type="ECO:0000255" key="1">
    <source>
        <dbReference type="HAMAP-Rule" id="MF_01207"/>
    </source>
</evidence>
<evidence type="ECO:0000305" key="2"/>
<accession>Q7W5H7</accession>
<organism>
    <name type="scientific">Bordetella parapertussis (strain 12822 / ATCC BAA-587 / NCTC 13253)</name>
    <dbReference type="NCBI Taxonomy" id="257311"/>
    <lineage>
        <taxon>Bacteria</taxon>
        <taxon>Pseudomonadati</taxon>
        <taxon>Pseudomonadota</taxon>
        <taxon>Betaproteobacteria</taxon>
        <taxon>Burkholderiales</taxon>
        <taxon>Alcaligenaceae</taxon>
        <taxon>Bordetella</taxon>
    </lineage>
</organism>
<sequence length="206" mass="23238">MPAAPLTARAIGRIKPLLFVAGLLPFARWFWLGANDGLSANPVEFLTRSSGTWTLVCLLVTLAITPLRRLTGQPALVRLRRMCGLFAFFYGSLHFLAWVWWDRGLDPVSMLQDVGERPFITVGFAAFVLMAALAATSTQWAMRKLGKRWQVLHRAVYAIGLLAILHFWWHKAGKNDLQQPLLYGSVLALLLGWRVAAWWRRRGAAR</sequence>